<protein>
    <recommendedName>
        <fullName evidence="1">Small ribosomal subunit protein uS2c</fullName>
    </recommendedName>
    <alternativeName>
        <fullName>30S ribosomal protein S2, chloroplastic</fullName>
    </alternativeName>
</protein>
<organism>
    <name type="scientific">Populus trichocarpa</name>
    <name type="common">Western balsam poplar</name>
    <name type="synonym">Populus balsamifera subsp. trichocarpa</name>
    <dbReference type="NCBI Taxonomy" id="3694"/>
    <lineage>
        <taxon>Eukaryota</taxon>
        <taxon>Viridiplantae</taxon>
        <taxon>Streptophyta</taxon>
        <taxon>Embryophyta</taxon>
        <taxon>Tracheophyta</taxon>
        <taxon>Spermatophyta</taxon>
        <taxon>Magnoliopsida</taxon>
        <taxon>eudicotyledons</taxon>
        <taxon>Gunneridae</taxon>
        <taxon>Pentapetalae</taxon>
        <taxon>rosids</taxon>
        <taxon>fabids</taxon>
        <taxon>Malpighiales</taxon>
        <taxon>Salicaceae</taxon>
        <taxon>Saliceae</taxon>
        <taxon>Populus</taxon>
    </lineage>
</organism>
<evidence type="ECO:0000305" key="1"/>
<reference key="1">
    <citation type="journal article" date="2006" name="Science">
        <title>The genome of black cottonwood, Populus trichocarpa (Torr. &amp; Gray).</title>
        <authorList>
            <person name="Tuskan G.A."/>
            <person name="Difazio S."/>
            <person name="Jansson S."/>
            <person name="Bohlmann J."/>
            <person name="Grigoriev I."/>
            <person name="Hellsten U."/>
            <person name="Putnam N."/>
            <person name="Ralph S."/>
            <person name="Rombauts S."/>
            <person name="Salamov A."/>
            <person name="Schein J."/>
            <person name="Sterck L."/>
            <person name="Aerts A."/>
            <person name="Bhalerao R.R."/>
            <person name="Bhalerao R.P."/>
            <person name="Blaudez D."/>
            <person name="Boerjan W."/>
            <person name="Brun A."/>
            <person name="Brunner A."/>
            <person name="Busov V."/>
            <person name="Campbell M."/>
            <person name="Carlson J."/>
            <person name="Chalot M."/>
            <person name="Chapman J."/>
            <person name="Chen G.-L."/>
            <person name="Cooper D."/>
            <person name="Coutinho P.M."/>
            <person name="Couturier J."/>
            <person name="Covert S."/>
            <person name="Cronk Q."/>
            <person name="Cunningham R."/>
            <person name="Davis J."/>
            <person name="Degroeve S."/>
            <person name="Dejardin A."/>
            <person name="dePamphilis C.W."/>
            <person name="Detter J."/>
            <person name="Dirks B."/>
            <person name="Dubchak I."/>
            <person name="Duplessis S."/>
            <person name="Ehlting J."/>
            <person name="Ellis B."/>
            <person name="Gendler K."/>
            <person name="Goodstein D."/>
            <person name="Gribskov M."/>
            <person name="Grimwood J."/>
            <person name="Groover A."/>
            <person name="Gunter L."/>
            <person name="Hamberger B."/>
            <person name="Heinze B."/>
            <person name="Helariutta Y."/>
            <person name="Henrissat B."/>
            <person name="Holligan D."/>
            <person name="Holt R."/>
            <person name="Huang W."/>
            <person name="Islam-Faridi N."/>
            <person name="Jones S."/>
            <person name="Jones-Rhoades M."/>
            <person name="Jorgensen R."/>
            <person name="Joshi C."/>
            <person name="Kangasjaervi J."/>
            <person name="Karlsson J."/>
            <person name="Kelleher C."/>
            <person name="Kirkpatrick R."/>
            <person name="Kirst M."/>
            <person name="Kohler A."/>
            <person name="Kalluri U."/>
            <person name="Larimer F."/>
            <person name="Leebens-Mack J."/>
            <person name="Leple J.-C."/>
            <person name="Locascio P."/>
            <person name="Lou Y."/>
            <person name="Lucas S."/>
            <person name="Martin F."/>
            <person name="Montanini B."/>
            <person name="Napoli C."/>
            <person name="Nelson D.R."/>
            <person name="Nelson C."/>
            <person name="Nieminen K."/>
            <person name="Nilsson O."/>
            <person name="Pereda V."/>
            <person name="Peter G."/>
            <person name="Philippe R."/>
            <person name="Pilate G."/>
            <person name="Poliakov A."/>
            <person name="Razumovskaya J."/>
            <person name="Richardson P."/>
            <person name="Rinaldi C."/>
            <person name="Ritland K."/>
            <person name="Rouze P."/>
            <person name="Ryaboy D."/>
            <person name="Schmutz J."/>
            <person name="Schrader J."/>
            <person name="Segerman B."/>
            <person name="Shin H."/>
            <person name="Siddiqui A."/>
            <person name="Sterky F."/>
            <person name="Terry A."/>
            <person name="Tsai C.-J."/>
            <person name="Uberbacher E."/>
            <person name="Unneberg P."/>
            <person name="Vahala J."/>
            <person name="Wall K."/>
            <person name="Wessler S."/>
            <person name="Yang G."/>
            <person name="Yin T."/>
            <person name="Douglas C."/>
            <person name="Marra M."/>
            <person name="Sandberg G."/>
            <person name="Van de Peer Y."/>
            <person name="Rokhsar D.S."/>
        </authorList>
    </citation>
    <scope>NUCLEOTIDE SEQUENCE [LARGE SCALE GENOMIC DNA]</scope>
    <source>
        <strain>cv. Nisqually</strain>
    </source>
</reference>
<accession>A4GYP7</accession>
<name>RR2_POPTR</name>
<comment type="subcellular location">
    <subcellularLocation>
        <location>Plastid</location>
        <location>Chloroplast</location>
    </subcellularLocation>
</comment>
<comment type="similarity">
    <text evidence="1">Belongs to the universal ribosomal protein uS2 family.</text>
</comment>
<keyword id="KW-0150">Chloroplast</keyword>
<keyword id="KW-0934">Plastid</keyword>
<keyword id="KW-1185">Reference proteome</keyword>
<keyword id="KW-0687">Ribonucleoprotein</keyword>
<keyword id="KW-0689">Ribosomal protein</keyword>
<geneLocation type="chloroplast"/>
<dbReference type="EMBL" id="EF489041">
    <property type="protein sequence ID" value="ABO36691.1"/>
    <property type="molecule type" value="Genomic_DNA"/>
</dbReference>
<dbReference type="RefSeq" id="YP_001109488.1">
    <property type="nucleotide sequence ID" value="NC_009143.1"/>
</dbReference>
<dbReference type="SMR" id="A4GYP7"/>
<dbReference type="FunCoup" id="A4GYP7">
    <property type="interactions" value="837"/>
</dbReference>
<dbReference type="STRING" id="3694.A4GYP7"/>
<dbReference type="EnsemblPlants" id="Potri.013G139670.1.v4.1">
    <property type="protein sequence ID" value="Potri.013G139670.1.v4.1"/>
    <property type="gene ID" value="Potri.013G139670.v4.1"/>
</dbReference>
<dbReference type="GeneID" id="4929642"/>
<dbReference type="Gramene" id="Potri.013G139670.1.v4.1">
    <property type="protein sequence ID" value="Potri.013G139670.1.v4.1"/>
    <property type="gene ID" value="Potri.013G139670.v4.1"/>
</dbReference>
<dbReference type="KEGG" id="pop:4929642"/>
<dbReference type="InParanoid" id="A4GYP7"/>
<dbReference type="OMA" id="PYIFMEK"/>
<dbReference type="OrthoDB" id="565471at2759"/>
<dbReference type="Proteomes" id="UP000006729">
    <property type="component" value="Chloroplast"/>
</dbReference>
<dbReference type="GO" id="GO:0009507">
    <property type="term" value="C:chloroplast"/>
    <property type="evidence" value="ECO:0007669"/>
    <property type="project" value="UniProtKB-SubCell"/>
</dbReference>
<dbReference type="GO" id="GO:0005763">
    <property type="term" value="C:mitochondrial small ribosomal subunit"/>
    <property type="evidence" value="ECO:0000318"/>
    <property type="project" value="GO_Central"/>
</dbReference>
<dbReference type="GO" id="GO:0003735">
    <property type="term" value="F:structural constituent of ribosome"/>
    <property type="evidence" value="ECO:0000318"/>
    <property type="project" value="GO_Central"/>
</dbReference>
<dbReference type="GO" id="GO:0006412">
    <property type="term" value="P:translation"/>
    <property type="evidence" value="ECO:0007669"/>
    <property type="project" value="UniProtKB-UniRule"/>
</dbReference>
<dbReference type="CDD" id="cd01425">
    <property type="entry name" value="RPS2"/>
    <property type="match status" value="1"/>
</dbReference>
<dbReference type="FunFam" id="3.40.50.10490:FF:000101">
    <property type="match status" value="1"/>
</dbReference>
<dbReference type="FunFam" id="1.10.287.610:FF:000001">
    <property type="entry name" value="30S ribosomal protein S2"/>
    <property type="match status" value="1"/>
</dbReference>
<dbReference type="Gene3D" id="3.40.50.10490">
    <property type="entry name" value="Glucose-6-phosphate isomerase like protein, domain 1"/>
    <property type="match status" value="1"/>
</dbReference>
<dbReference type="Gene3D" id="1.10.287.610">
    <property type="entry name" value="Helix hairpin bin"/>
    <property type="match status" value="1"/>
</dbReference>
<dbReference type="HAMAP" id="MF_00291_B">
    <property type="entry name" value="Ribosomal_uS2_B"/>
    <property type="match status" value="1"/>
</dbReference>
<dbReference type="InterPro" id="IPR001865">
    <property type="entry name" value="Ribosomal_uS2"/>
</dbReference>
<dbReference type="InterPro" id="IPR005706">
    <property type="entry name" value="Ribosomal_uS2_bac/mit/plastid"/>
</dbReference>
<dbReference type="InterPro" id="IPR018130">
    <property type="entry name" value="Ribosomal_uS2_CS"/>
</dbReference>
<dbReference type="InterPro" id="IPR023591">
    <property type="entry name" value="Ribosomal_uS2_flav_dom_sf"/>
</dbReference>
<dbReference type="NCBIfam" id="TIGR01011">
    <property type="entry name" value="rpsB_bact"/>
    <property type="match status" value="1"/>
</dbReference>
<dbReference type="PANTHER" id="PTHR12534">
    <property type="entry name" value="30S RIBOSOMAL PROTEIN S2 PROKARYOTIC AND ORGANELLAR"/>
    <property type="match status" value="1"/>
</dbReference>
<dbReference type="PANTHER" id="PTHR12534:SF0">
    <property type="entry name" value="SMALL RIBOSOMAL SUBUNIT PROTEIN US2M"/>
    <property type="match status" value="1"/>
</dbReference>
<dbReference type="Pfam" id="PF00318">
    <property type="entry name" value="Ribosomal_S2"/>
    <property type="match status" value="1"/>
</dbReference>
<dbReference type="PRINTS" id="PR00395">
    <property type="entry name" value="RIBOSOMALS2"/>
</dbReference>
<dbReference type="SUPFAM" id="SSF52313">
    <property type="entry name" value="Ribosomal protein S2"/>
    <property type="match status" value="1"/>
</dbReference>
<dbReference type="PROSITE" id="PS00962">
    <property type="entry name" value="RIBOSOMAL_S2_1"/>
    <property type="match status" value="1"/>
</dbReference>
<dbReference type="PROSITE" id="PS00963">
    <property type="entry name" value="RIBOSOMAL_S2_2"/>
    <property type="match status" value="1"/>
</dbReference>
<sequence length="236" mass="26928">MIRRYWNINLKEMLETGVHFGHATRKWNPKMAPYISAKRKGIHITNLTRTARFLSEACDLVFDAASRRKQFLIVGTKNKAADPVARAAIRARCHYVNKKWLGGLLTNWSTTEMRLQKFRDLRMEQKTGGIHRLPKGDAARLKRQLFHLQTYLGGIKYMTGLPDIVIIVDQQEEYMALQECITLGIPTICLIDTNCDPDLTDISIPANDDAIASIRLILNKLVFAICEGRSSYIRNP</sequence>
<proteinExistence type="inferred from homology"/>
<feature type="chain" id="PRO_0000352154" description="Small ribosomal subunit protein uS2c">
    <location>
        <begin position="1"/>
        <end position="236"/>
    </location>
</feature>
<gene>
    <name type="primary">rps2</name>
    <name type="ordered locus">Poptr_cp009</name>
</gene>